<name>Y2011_LACLS</name>
<organism>
    <name type="scientific">Lactococcus lactis subsp. cremoris (strain SK11)</name>
    <dbReference type="NCBI Taxonomy" id="272622"/>
    <lineage>
        <taxon>Bacteria</taxon>
        <taxon>Bacillati</taxon>
        <taxon>Bacillota</taxon>
        <taxon>Bacilli</taxon>
        <taxon>Lactobacillales</taxon>
        <taxon>Streptococcaceae</taxon>
        <taxon>Lactococcus</taxon>
        <taxon>Lactococcus cremoris subsp. cremoris</taxon>
    </lineage>
</organism>
<proteinExistence type="inferred from homology"/>
<reference key="1">
    <citation type="journal article" date="2006" name="Proc. Natl. Acad. Sci. U.S.A.">
        <title>Comparative genomics of the lactic acid bacteria.</title>
        <authorList>
            <person name="Makarova K.S."/>
            <person name="Slesarev A."/>
            <person name="Wolf Y.I."/>
            <person name="Sorokin A."/>
            <person name="Mirkin B."/>
            <person name="Koonin E.V."/>
            <person name="Pavlov A."/>
            <person name="Pavlova N."/>
            <person name="Karamychev V."/>
            <person name="Polouchine N."/>
            <person name="Shakhova V."/>
            <person name="Grigoriev I."/>
            <person name="Lou Y."/>
            <person name="Rohksar D."/>
            <person name="Lucas S."/>
            <person name="Huang K."/>
            <person name="Goodstein D.M."/>
            <person name="Hawkins T."/>
            <person name="Plengvidhya V."/>
            <person name="Welker D."/>
            <person name="Hughes J."/>
            <person name="Goh Y."/>
            <person name="Benson A."/>
            <person name="Baldwin K."/>
            <person name="Lee J.-H."/>
            <person name="Diaz-Muniz I."/>
            <person name="Dosti B."/>
            <person name="Smeianov V."/>
            <person name="Wechter W."/>
            <person name="Barabote R."/>
            <person name="Lorca G."/>
            <person name="Altermann E."/>
            <person name="Barrangou R."/>
            <person name="Ganesan B."/>
            <person name="Xie Y."/>
            <person name="Rawsthorne H."/>
            <person name="Tamir D."/>
            <person name="Parker C."/>
            <person name="Breidt F."/>
            <person name="Broadbent J.R."/>
            <person name="Hutkins R."/>
            <person name="O'Sullivan D."/>
            <person name="Steele J."/>
            <person name="Unlu G."/>
            <person name="Saier M.H. Jr."/>
            <person name="Klaenhammer T."/>
            <person name="Richardson P."/>
            <person name="Kozyavkin S."/>
            <person name="Weimer B.C."/>
            <person name="Mills D.A."/>
        </authorList>
    </citation>
    <scope>NUCLEOTIDE SEQUENCE [LARGE SCALE GENOMIC DNA]</scope>
    <source>
        <strain>SK11</strain>
    </source>
</reference>
<evidence type="ECO:0000255" key="1">
    <source>
        <dbReference type="PROSITE-ProRule" id="PRU00977"/>
    </source>
</evidence>
<evidence type="ECO:0000305" key="2"/>
<protein>
    <recommendedName>
        <fullName>UPF0213 protein LACR_2011</fullName>
    </recommendedName>
</protein>
<sequence>MNTHFTYVLQCADQTLYCGYTTDLEKRLATHNSGKGAKYTKTRLPVKLLASVNFDNKNDAMSCEWWFKHKLVRQQKLKLIKNNLIKEKFLEYLLAKQK</sequence>
<dbReference type="EMBL" id="CP000425">
    <property type="protein sequence ID" value="ABJ73492.1"/>
    <property type="molecule type" value="Genomic_DNA"/>
</dbReference>
<dbReference type="RefSeq" id="WP_011676835.1">
    <property type="nucleotide sequence ID" value="NC_008527.1"/>
</dbReference>
<dbReference type="SMR" id="Q02X30"/>
<dbReference type="KEGG" id="llc:LACR_2011"/>
<dbReference type="HOGENOM" id="CLU_135650_0_3_9"/>
<dbReference type="Proteomes" id="UP000000240">
    <property type="component" value="Chromosome"/>
</dbReference>
<dbReference type="CDD" id="cd10456">
    <property type="entry name" value="GIY-YIG_UPF0213"/>
    <property type="match status" value="1"/>
</dbReference>
<dbReference type="Gene3D" id="3.40.1440.10">
    <property type="entry name" value="GIY-YIG endonuclease"/>
    <property type="match status" value="1"/>
</dbReference>
<dbReference type="InterPro" id="IPR000305">
    <property type="entry name" value="GIY-YIG_endonuc"/>
</dbReference>
<dbReference type="InterPro" id="IPR035901">
    <property type="entry name" value="GIY-YIG_endonuc_sf"/>
</dbReference>
<dbReference type="InterPro" id="IPR050190">
    <property type="entry name" value="UPF0213_domain"/>
</dbReference>
<dbReference type="PANTHER" id="PTHR34477">
    <property type="entry name" value="UPF0213 PROTEIN YHBQ"/>
    <property type="match status" value="1"/>
</dbReference>
<dbReference type="PANTHER" id="PTHR34477:SF1">
    <property type="entry name" value="UPF0213 PROTEIN YHBQ"/>
    <property type="match status" value="1"/>
</dbReference>
<dbReference type="Pfam" id="PF01541">
    <property type="entry name" value="GIY-YIG"/>
    <property type="match status" value="1"/>
</dbReference>
<dbReference type="SUPFAM" id="SSF82771">
    <property type="entry name" value="GIY-YIG endonuclease"/>
    <property type="match status" value="1"/>
</dbReference>
<dbReference type="PROSITE" id="PS50164">
    <property type="entry name" value="GIY_YIG"/>
    <property type="match status" value="1"/>
</dbReference>
<gene>
    <name type="ordered locus">LACR_2011</name>
</gene>
<accession>Q02X30</accession>
<comment type="similarity">
    <text evidence="2">Belongs to the UPF0213 family.</text>
</comment>
<feature type="chain" id="PRO_1000063670" description="UPF0213 protein LACR_2011">
    <location>
        <begin position="1"/>
        <end position="98"/>
    </location>
</feature>
<feature type="domain" description="GIY-YIG" evidence="1">
    <location>
        <begin position="2"/>
        <end position="79"/>
    </location>
</feature>